<sequence>MAEMNPAQGRVVFEDVAIYFSQEEWGHLDEAQRLLYRDVMLENLALLSSLGCCHGAEDEEAPLEPGVSVGVSQVMAPKPCLSTQKTQPCETCSSLLKDILRLAEHDGTHPEQGLYTCPAHLHQHQKEQIREKLSRGDGGRPTYVKNHRVHMAGKTFLCSECGKVFSHKHKLADHQKIHTGERPYKCSKCGMLFMERSTLNRHQRTHTGERPYECNECGKAFLCKSHLVRHQTIHSGERPYECSECGKLFMWSSTLITHQRVHTGKRPYGCSECGKFFKCNSNLFRHYKIHTGKRSYGCSECGKFFTERSTLSRHQRVHTGERPYECNECGKSFSLKSVLIQHQRVHTGERPYECSECGKAFLTKSHLICHQTVHTAAKQCSECGKFFRYNSTLLRHQKVHTG</sequence>
<comment type="function">
    <text>May be involved in transcriptional regulation.</text>
</comment>
<comment type="subcellular location">
    <subcellularLocation>
        <location evidence="3">Nucleus</location>
    </subcellularLocation>
</comment>
<comment type="similarity">
    <text evidence="3">Belongs to the krueppel C2H2-type zinc-finger protein family.</text>
</comment>
<name>ZN547_PONAB</name>
<organism>
    <name type="scientific">Pongo abelii</name>
    <name type="common">Sumatran orangutan</name>
    <name type="synonym">Pongo pygmaeus abelii</name>
    <dbReference type="NCBI Taxonomy" id="9601"/>
    <lineage>
        <taxon>Eukaryota</taxon>
        <taxon>Metazoa</taxon>
        <taxon>Chordata</taxon>
        <taxon>Craniata</taxon>
        <taxon>Vertebrata</taxon>
        <taxon>Euteleostomi</taxon>
        <taxon>Mammalia</taxon>
        <taxon>Eutheria</taxon>
        <taxon>Euarchontoglires</taxon>
        <taxon>Primates</taxon>
        <taxon>Haplorrhini</taxon>
        <taxon>Catarrhini</taxon>
        <taxon>Hominidae</taxon>
        <taxon>Pongo</taxon>
    </lineage>
</organism>
<protein>
    <recommendedName>
        <fullName>Zinc finger protein 547</fullName>
    </recommendedName>
</protein>
<evidence type="ECO:0000255" key="1">
    <source>
        <dbReference type="PROSITE-ProRule" id="PRU00042"/>
    </source>
</evidence>
<evidence type="ECO:0000255" key="2">
    <source>
        <dbReference type="PROSITE-ProRule" id="PRU00119"/>
    </source>
</evidence>
<evidence type="ECO:0000305" key="3"/>
<reference key="1">
    <citation type="submission" date="2004-11" db="EMBL/GenBank/DDBJ databases">
        <authorList>
            <consortium name="The German cDNA consortium"/>
        </authorList>
    </citation>
    <scope>NUCLEOTIDE SEQUENCE [LARGE SCALE MRNA]</scope>
    <source>
        <tissue>Heart</tissue>
    </source>
</reference>
<gene>
    <name type="primary">ZNF547</name>
</gene>
<proteinExistence type="evidence at transcript level"/>
<dbReference type="EMBL" id="CR858144">
    <property type="protein sequence ID" value="CAH90383.1"/>
    <property type="molecule type" value="mRNA"/>
</dbReference>
<dbReference type="RefSeq" id="NP_001125187.1">
    <property type="nucleotide sequence ID" value="NM_001131715.2"/>
</dbReference>
<dbReference type="SMR" id="Q5RCX4"/>
<dbReference type="STRING" id="9601.ENSPPYP00000011739"/>
<dbReference type="GeneID" id="100172077"/>
<dbReference type="KEGG" id="pon:100172077"/>
<dbReference type="CTD" id="284306"/>
<dbReference type="InParanoid" id="Q5RCX4"/>
<dbReference type="OrthoDB" id="40579at2759"/>
<dbReference type="Proteomes" id="UP000001595">
    <property type="component" value="Unplaced"/>
</dbReference>
<dbReference type="GO" id="GO:0005634">
    <property type="term" value="C:nucleus"/>
    <property type="evidence" value="ECO:0007669"/>
    <property type="project" value="UniProtKB-SubCell"/>
</dbReference>
<dbReference type="GO" id="GO:0003700">
    <property type="term" value="F:DNA-binding transcription factor activity"/>
    <property type="evidence" value="ECO:0007669"/>
    <property type="project" value="TreeGrafter"/>
</dbReference>
<dbReference type="GO" id="GO:0000978">
    <property type="term" value="F:RNA polymerase II cis-regulatory region sequence-specific DNA binding"/>
    <property type="evidence" value="ECO:0007669"/>
    <property type="project" value="TreeGrafter"/>
</dbReference>
<dbReference type="GO" id="GO:0008270">
    <property type="term" value="F:zinc ion binding"/>
    <property type="evidence" value="ECO:0007669"/>
    <property type="project" value="UniProtKB-KW"/>
</dbReference>
<dbReference type="GO" id="GO:0006357">
    <property type="term" value="P:regulation of transcription by RNA polymerase II"/>
    <property type="evidence" value="ECO:0007669"/>
    <property type="project" value="TreeGrafter"/>
</dbReference>
<dbReference type="CDD" id="cd07765">
    <property type="entry name" value="KRAB_A-box"/>
    <property type="match status" value="1"/>
</dbReference>
<dbReference type="FunFam" id="3.30.160.60:FF:000620">
    <property type="entry name" value="Zinc finger protein 263"/>
    <property type="match status" value="1"/>
</dbReference>
<dbReference type="FunFam" id="3.30.160.60:FF:002343">
    <property type="entry name" value="Zinc finger protein 33A"/>
    <property type="match status" value="1"/>
</dbReference>
<dbReference type="FunFam" id="3.30.160.60:FF:000023">
    <property type="entry name" value="zinc finger protein 37 homolog"/>
    <property type="match status" value="1"/>
</dbReference>
<dbReference type="FunFam" id="3.30.160.60:FF:001368">
    <property type="entry name" value="Zinc finger protein 547"/>
    <property type="match status" value="1"/>
</dbReference>
<dbReference type="FunFam" id="3.30.160.60:FF:001964">
    <property type="entry name" value="Zinc finger protein 547"/>
    <property type="match status" value="1"/>
</dbReference>
<dbReference type="FunFam" id="3.30.160.60:FF:000281">
    <property type="entry name" value="Zinc finger protein 558 isoform X1"/>
    <property type="match status" value="1"/>
</dbReference>
<dbReference type="FunFam" id="3.30.160.60:FF:000098">
    <property type="entry name" value="Zinc finger protein 614"/>
    <property type="match status" value="1"/>
</dbReference>
<dbReference type="FunFam" id="3.30.160.60:FF:001697">
    <property type="entry name" value="zinc finger protein 623"/>
    <property type="match status" value="1"/>
</dbReference>
<dbReference type="FunFam" id="3.30.160.60:FF:001828">
    <property type="entry name" value="Zinc finger protein-interacting with ribonucleoprotein K"/>
    <property type="match status" value="1"/>
</dbReference>
<dbReference type="Gene3D" id="6.10.140.140">
    <property type="match status" value="1"/>
</dbReference>
<dbReference type="Gene3D" id="3.30.160.60">
    <property type="entry name" value="Classic Zinc Finger"/>
    <property type="match status" value="9"/>
</dbReference>
<dbReference type="InterPro" id="IPR050589">
    <property type="entry name" value="Ikaros_C2H2-ZF"/>
</dbReference>
<dbReference type="InterPro" id="IPR001909">
    <property type="entry name" value="KRAB"/>
</dbReference>
<dbReference type="InterPro" id="IPR036051">
    <property type="entry name" value="KRAB_dom_sf"/>
</dbReference>
<dbReference type="InterPro" id="IPR036236">
    <property type="entry name" value="Znf_C2H2_sf"/>
</dbReference>
<dbReference type="InterPro" id="IPR013087">
    <property type="entry name" value="Znf_C2H2_type"/>
</dbReference>
<dbReference type="PANTHER" id="PTHR24404:SF114">
    <property type="entry name" value="KLUMPFUSS, ISOFORM B-RELATED"/>
    <property type="match status" value="1"/>
</dbReference>
<dbReference type="PANTHER" id="PTHR24404">
    <property type="entry name" value="ZINC FINGER PROTEIN"/>
    <property type="match status" value="1"/>
</dbReference>
<dbReference type="Pfam" id="PF01352">
    <property type="entry name" value="KRAB"/>
    <property type="match status" value="1"/>
</dbReference>
<dbReference type="Pfam" id="PF00096">
    <property type="entry name" value="zf-C2H2"/>
    <property type="match status" value="6"/>
</dbReference>
<dbReference type="Pfam" id="PF13465">
    <property type="entry name" value="zf-H2C2_2"/>
    <property type="match status" value="1"/>
</dbReference>
<dbReference type="SMART" id="SM00349">
    <property type="entry name" value="KRAB"/>
    <property type="match status" value="1"/>
</dbReference>
<dbReference type="SMART" id="SM00355">
    <property type="entry name" value="ZnF_C2H2"/>
    <property type="match status" value="10"/>
</dbReference>
<dbReference type="SUPFAM" id="SSF57667">
    <property type="entry name" value="beta-beta-alpha zinc fingers"/>
    <property type="match status" value="5"/>
</dbReference>
<dbReference type="SUPFAM" id="SSF109640">
    <property type="entry name" value="KRAB domain (Kruppel-associated box)"/>
    <property type="match status" value="1"/>
</dbReference>
<dbReference type="PROSITE" id="PS50805">
    <property type="entry name" value="KRAB"/>
    <property type="match status" value="1"/>
</dbReference>
<dbReference type="PROSITE" id="PS00028">
    <property type="entry name" value="ZINC_FINGER_C2H2_1"/>
    <property type="match status" value="10"/>
</dbReference>
<dbReference type="PROSITE" id="PS50157">
    <property type="entry name" value="ZINC_FINGER_C2H2_2"/>
    <property type="match status" value="9"/>
</dbReference>
<feature type="chain" id="PRO_0000047645" description="Zinc finger protein 547">
    <location>
        <begin position="1"/>
        <end position="402"/>
    </location>
</feature>
<feature type="domain" description="KRAB" evidence="2">
    <location>
        <begin position="11"/>
        <end position="82"/>
    </location>
</feature>
<feature type="zinc finger region" description="C2H2-type 1; degenerate" evidence="1">
    <location>
        <begin position="87"/>
        <end position="109"/>
    </location>
</feature>
<feature type="zinc finger region" description="C2H2-type 2" evidence="1">
    <location>
        <begin position="156"/>
        <end position="178"/>
    </location>
</feature>
<feature type="zinc finger region" description="C2H2-type 3" evidence="1">
    <location>
        <begin position="184"/>
        <end position="206"/>
    </location>
</feature>
<feature type="zinc finger region" description="C2H2-type 4" evidence="1">
    <location>
        <begin position="212"/>
        <end position="234"/>
    </location>
</feature>
<feature type="zinc finger region" description="C2H2-type 5" evidence="1">
    <location>
        <begin position="240"/>
        <end position="262"/>
    </location>
</feature>
<feature type="zinc finger region" description="C2H2-type 6" evidence="1">
    <location>
        <begin position="268"/>
        <end position="290"/>
    </location>
</feature>
<feature type="zinc finger region" description="C2H2-type 7" evidence="1">
    <location>
        <begin position="296"/>
        <end position="318"/>
    </location>
</feature>
<feature type="zinc finger region" description="C2H2-type 8" evidence="1">
    <location>
        <begin position="324"/>
        <end position="346"/>
    </location>
</feature>
<feature type="zinc finger region" description="C2H2-type 9" evidence="1">
    <location>
        <begin position="352"/>
        <end position="374"/>
    </location>
</feature>
<feature type="zinc finger region" description="C2H2-type 10" evidence="1">
    <location>
        <begin position="378"/>
        <end position="400"/>
    </location>
</feature>
<accession>Q5RCX4</accession>
<keyword id="KW-0238">DNA-binding</keyword>
<keyword id="KW-0479">Metal-binding</keyword>
<keyword id="KW-0539">Nucleus</keyword>
<keyword id="KW-1185">Reference proteome</keyword>
<keyword id="KW-0677">Repeat</keyword>
<keyword id="KW-0804">Transcription</keyword>
<keyword id="KW-0805">Transcription regulation</keyword>
<keyword id="KW-0862">Zinc</keyword>
<keyword id="KW-0863">Zinc-finger</keyword>